<organism>
    <name type="scientific">Phocaeicola vulgatus (strain ATCC 8482 / DSM 1447 / JCM 5826 / CCUG 4940 / NBRC 14291 / NCTC 11154)</name>
    <name type="common">Bacteroides vulgatus</name>
    <dbReference type="NCBI Taxonomy" id="435590"/>
    <lineage>
        <taxon>Bacteria</taxon>
        <taxon>Pseudomonadati</taxon>
        <taxon>Bacteroidota</taxon>
        <taxon>Bacteroidia</taxon>
        <taxon>Bacteroidales</taxon>
        <taxon>Bacteroidaceae</taxon>
        <taxon>Phocaeicola</taxon>
    </lineage>
</organism>
<dbReference type="EC" id="6.3.4.4" evidence="1"/>
<dbReference type="EMBL" id="CP000139">
    <property type="protein sequence ID" value="ABR39685.1"/>
    <property type="molecule type" value="Genomic_DNA"/>
</dbReference>
<dbReference type="RefSeq" id="WP_005841117.1">
    <property type="nucleotide sequence ID" value="NZ_JANSWM010000111.1"/>
</dbReference>
<dbReference type="SMR" id="A6L1X1"/>
<dbReference type="STRING" id="435590.BVU_2018"/>
<dbReference type="PaxDb" id="435590-BVU_2018"/>
<dbReference type="GeneID" id="5302984"/>
<dbReference type="KEGG" id="bvu:BVU_2018"/>
<dbReference type="eggNOG" id="COG0104">
    <property type="taxonomic scope" value="Bacteria"/>
</dbReference>
<dbReference type="HOGENOM" id="CLU_029848_0_0_10"/>
<dbReference type="BioCyc" id="BVUL435590:G1G59-2113-MONOMER"/>
<dbReference type="UniPathway" id="UPA00075">
    <property type="reaction ID" value="UER00335"/>
</dbReference>
<dbReference type="Proteomes" id="UP000002861">
    <property type="component" value="Chromosome"/>
</dbReference>
<dbReference type="GO" id="GO:0005737">
    <property type="term" value="C:cytoplasm"/>
    <property type="evidence" value="ECO:0007669"/>
    <property type="project" value="UniProtKB-SubCell"/>
</dbReference>
<dbReference type="GO" id="GO:0004019">
    <property type="term" value="F:adenylosuccinate synthase activity"/>
    <property type="evidence" value="ECO:0007669"/>
    <property type="project" value="UniProtKB-UniRule"/>
</dbReference>
<dbReference type="GO" id="GO:0005525">
    <property type="term" value="F:GTP binding"/>
    <property type="evidence" value="ECO:0007669"/>
    <property type="project" value="UniProtKB-UniRule"/>
</dbReference>
<dbReference type="GO" id="GO:0000287">
    <property type="term" value="F:magnesium ion binding"/>
    <property type="evidence" value="ECO:0007669"/>
    <property type="project" value="UniProtKB-UniRule"/>
</dbReference>
<dbReference type="GO" id="GO:0044208">
    <property type="term" value="P:'de novo' AMP biosynthetic process"/>
    <property type="evidence" value="ECO:0007669"/>
    <property type="project" value="UniProtKB-UniRule"/>
</dbReference>
<dbReference type="GO" id="GO:0046040">
    <property type="term" value="P:IMP metabolic process"/>
    <property type="evidence" value="ECO:0007669"/>
    <property type="project" value="TreeGrafter"/>
</dbReference>
<dbReference type="CDD" id="cd03108">
    <property type="entry name" value="AdSS"/>
    <property type="match status" value="1"/>
</dbReference>
<dbReference type="FunFam" id="1.10.300.10:FF:000001">
    <property type="entry name" value="Adenylosuccinate synthetase"/>
    <property type="match status" value="1"/>
</dbReference>
<dbReference type="FunFam" id="3.90.170.10:FF:000001">
    <property type="entry name" value="Adenylosuccinate synthetase"/>
    <property type="match status" value="1"/>
</dbReference>
<dbReference type="Gene3D" id="3.40.440.10">
    <property type="entry name" value="Adenylosuccinate Synthetase, subunit A, domain 1"/>
    <property type="match status" value="1"/>
</dbReference>
<dbReference type="Gene3D" id="1.10.300.10">
    <property type="entry name" value="Adenylosuccinate Synthetase, subunit A, domain 2"/>
    <property type="match status" value="1"/>
</dbReference>
<dbReference type="Gene3D" id="3.90.170.10">
    <property type="entry name" value="Adenylosuccinate Synthetase, subunit A, domain 3"/>
    <property type="match status" value="1"/>
</dbReference>
<dbReference type="HAMAP" id="MF_00011">
    <property type="entry name" value="Adenylosucc_synth"/>
    <property type="match status" value="1"/>
</dbReference>
<dbReference type="InterPro" id="IPR018220">
    <property type="entry name" value="Adenylosuccin_syn_GTP-bd"/>
</dbReference>
<dbReference type="InterPro" id="IPR033128">
    <property type="entry name" value="Adenylosuccin_syn_Lys_AS"/>
</dbReference>
<dbReference type="InterPro" id="IPR042109">
    <property type="entry name" value="Adenylosuccinate_synth_dom1"/>
</dbReference>
<dbReference type="InterPro" id="IPR042110">
    <property type="entry name" value="Adenylosuccinate_synth_dom2"/>
</dbReference>
<dbReference type="InterPro" id="IPR042111">
    <property type="entry name" value="Adenylosuccinate_synth_dom3"/>
</dbReference>
<dbReference type="InterPro" id="IPR001114">
    <property type="entry name" value="Adenylosuccinate_synthetase"/>
</dbReference>
<dbReference type="InterPro" id="IPR027417">
    <property type="entry name" value="P-loop_NTPase"/>
</dbReference>
<dbReference type="NCBIfam" id="NF002223">
    <property type="entry name" value="PRK01117.1"/>
    <property type="match status" value="1"/>
</dbReference>
<dbReference type="NCBIfam" id="TIGR00184">
    <property type="entry name" value="purA"/>
    <property type="match status" value="1"/>
</dbReference>
<dbReference type="PANTHER" id="PTHR11846">
    <property type="entry name" value="ADENYLOSUCCINATE SYNTHETASE"/>
    <property type="match status" value="1"/>
</dbReference>
<dbReference type="PANTHER" id="PTHR11846:SF0">
    <property type="entry name" value="ADENYLOSUCCINATE SYNTHETASE"/>
    <property type="match status" value="1"/>
</dbReference>
<dbReference type="Pfam" id="PF00709">
    <property type="entry name" value="Adenylsucc_synt"/>
    <property type="match status" value="1"/>
</dbReference>
<dbReference type="SMART" id="SM00788">
    <property type="entry name" value="Adenylsucc_synt"/>
    <property type="match status" value="1"/>
</dbReference>
<dbReference type="SUPFAM" id="SSF52540">
    <property type="entry name" value="P-loop containing nucleoside triphosphate hydrolases"/>
    <property type="match status" value="1"/>
</dbReference>
<dbReference type="PROSITE" id="PS01266">
    <property type="entry name" value="ADENYLOSUCCIN_SYN_1"/>
    <property type="match status" value="1"/>
</dbReference>
<dbReference type="PROSITE" id="PS00513">
    <property type="entry name" value="ADENYLOSUCCIN_SYN_2"/>
    <property type="match status" value="1"/>
</dbReference>
<evidence type="ECO:0000255" key="1">
    <source>
        <dbReference type="HAMAP-Rule" id="MF_00011"/>
    </source>
</evidence>
<protein>
    <recommendedName>
        <fullName evidence="1">Adenylosuccinate synthetase</fullName>
        <shortName evidence="1">AMPSase</shortName>
        <shortName evidence="1">AdSS</shortName>
        <ecNumber evidence="1">6.3.4.4</ecNumber>
    </recommendedName>
    <alternativeName>
        <fullName evidence="1">IMP--aspartate ligase</fullName>
    </alternativeName>
</protein>
<gene>
    <name evidence="1" type="primary">purA</name>
    <name type="ordered locus">BVU_2018</name>
</gene>
<comment type="function">
    <text evidence="1">Plays an important role in the de novo pathway of purine nucleotide biosynthesis. Catalyzes the first committed step in the biosynthesis of AMP from IMP.</text>
</comment>
<comment type="catalytic activity">
    <reaction evidence="1">
        <text>IMP + L-aspartate + GTP = N(6)-(1,2-dicarboxyethyl)-AMP + GDP + phosphate + 2 H(+)</text>
        <dbReference type="Rhea" id="RHEA:15753"/>
        <dbReference type="ChEBI" id="CHEBI:15378"/>
        <dbReference type="ChEBI" id="CHEBI:29991"/>
        <dbReference type="ChEBI" id="CHEBI:37565"/>
        <dbReference type="ChEBI" id="CHEBI:43474"/>
        <dbReference type="ChEBI" id="CHEBI:57567"/>
        <dbReference type="ChEBI" id="CHEBI:58053"/>
        <dbReference type="ChEBI" id="CHEBI:58189"/>
        <dbReference type="EC" id="6.3.4.4"/>
    </reaction>
</comment>
<comment type="cofactor">
    <cofactor evidence="1">
        <name>Mg(2+)</name>
        <dbReference type="ChEBI" id="CHEBI:18420"/>
    </cofactor>
    <text evidence="1">Binds 1 Mg(2+) ion per subunit.</text>
</comment>
<comment type="pathway">
    <text evidence="1">Purine metabolism; AMP biosynthesis via de novo pathway; AMP from IMP: step 1/2.</text>
</comment>
<comment type="subunit">
    <text evidence="1">Homodimer.</text>
</comment>
<comment type="subcellular location">
    <subcellularLocation>
        <location evidence="1">Cytoplasm</location>
    </subcellularLocation>
</comment>
<comment type="similarity">
    <text evidence="1">Belongs to the adenylosuccinate synthetase family.</text>
</comment>
<accession>A6L1X1</accession>
<name>PURA_PHOV8</name>
<keyword id="KW-0963">Cytoplasm</keyword>
<keyword id="KW-0342">GTP-binding</keyword>
<keyword id="KW-0436">Ligase</keyword>
<keyword id="KW-0460">Magnesium</keyword>
<keyword id="KW-0479">Metal-binding</keyword>
<keyword id="KW-0547">Nucleotide-binding</keyword>
<keyword id="KW-0658">Purine biosynthesis</keyword>
<sequence>MKVDVLLGLQWGDEGKGKVVDVLTPRYDVVARFQGGPNAGHTLEFEGQKYVLRSIPSGIFQGNKVNIIGNGVVLDPALFKAEAEALEASGHPLKERLHISKKAHLILPTHRILDAAYEAAKGDAKVGTTGKGIGPTYTDKVSRNGVRVGDILHNFEEVYGKAKARHEQILKSLNYEYDITELEKQWLEGIEYLKQFHLVDSEHEINNLLKSGKSVLCEGAQGTMLDVDFGSYPFVTSSNTICAGACTGLGIGPNKIGNVYGIMKAYCTRVGAGPFPTELFDETGKKIRDLGHEYGAVTGRERRCGWIDLVALKYSIMVNGVTQLIMMKSDVLDDFETIKACVAYKVNGEEIDYFPYDISEGLEPVYAELPGWKTDMTKMTSEDEFPEEFNAYVTFLEEQLETPIKIVSVGPDRGQTIERYTEE</sequence>
<feature type="chain" id="PRO_1000000780" description="Adenylosuccinate synthetase">
    <location>
        <begin position="1"/>
        <end position="423"/>
    </location>
</feature>
<feature type="active site" description="Proton acceptor" evidence="1">
    <location>
        <position position="13"/>
    </location>
</feature>
<feature type="active site" description="Proton donor" evidence="1">
    <location>
        <position position="41"/>
    </location>
</feature>
<feature type="binding site" evidence="1">
    <location>
        <begin position="12"/>
        <end position="18"/>
    </location>
    <ligand>
        <name>GTP</name>
        <dbReference type="ChEBI" id="CHEBI:37565"/>
    </ligand>
</feature>
<feature type="binding site" description="in other chain" evidence="1">
    <location>
        <begin position="13"/>
        <end position="16"/>
    </location>
    <ligand>
        <name>IMP</name>
        <dbReference type="ChEBI" id="CHEBI:58053"/>
        <note>ligand shared between dimeric partners</note>
    </ligand>
</feature>
<feature type="binding site" evidence="1">
    <location>
        <position position="13"/>
    </location>
    <ligand>
        <name>Mg(2+)</name>
        <dbReference type="ChEBI" id="CHEBI:18420"/>
    </ligand>
</feature>
<feature type="binding site" description="in other chain" evidence="1">
    <location>
        <begin position="38"/>
        <end position="41"/>
    </location>
    <ligand>
        <name>IMP</name>
        <dbReference type="ChEBI" id="CHEBI:58053"/>
        <note>ligand shared between dimeric partners</note>
    </ligand>
</feature>
<feature type="binding site" evidence="1">
    <location>
        <begin position="40"/>
        <end position="42"/>
    </location>
    <ligand>
        <name>GTP</name>
        <dbReference type="ChEBI" id="CHEBI:37565"/>
    </ligand>
</feature>
<feature type="binding site" evidence="1">
    <location>
        <position position="40"/>
    </location>
    <ligand>
        <name>Mg(2+)</name>
        <dbReference type="ChEBI" id="CHEBI:18420"/>
    </ligand>
</feature>
<feature type="binding site" description="in other chain" evidence="1">
    <location>
        <position position="129"/>
    </location>
    <ligand>
        <name>IMP</name>
        <dbReference type="ChEBI" id="CHEBI:58053"/>
        <note>ligand shared between dimeric partners</note>
    </ligand>
</feature>
<feature type="binding site" evidence="1">
    <location>
        <position position="143"/>
    </location>
    <ligand>
        <name>IMP</name>
        <dbReference type="ChEBI" id="CHEBI:58053"/>
        <note>ligand shared between dimeric partners</note>
    </ligand>
</feature>
<feature type="binding site" description="in other chain" evidence="1">
    <location>
        <position position="221"/>
    </location>
    <ligand>
        <name>IMP</name>
        <dbReference type="ChEBI" id="CHEBI:58053"/>
        <note>ligand shared between dimeric partners</note>
    </ligand>
</feature>
<feature type="binding site" description="in other chain" evidence="1">
    <location>
        <position position="236"/>
    </location>
    <ligand>
        <name>IMP</name>
        <dbReference type="ChEBI" id="CHEBI:58053"/>
        <note>ligand shared between dimeric partners</note>
    </ligand>
</feature>
<feature type="binding site" evidence="1">
    <location>
        <begin position="296"/>
        <end position="302"/>
    </location>
    <ligand>
        <name>substrate</name>
    </ligand>
</feature>
<feature type="binding site" description="in other chain" evidence="1">
    <location>
        <position position="300"/>
    </location>
    <ligand>
        <name>IMP</name>
        <dbReference type="ChEBI" id="CHEBI:58053"/>
        <note>ligand shared between dimeric partners</note>
    </ligand>
</feature>
<feature type="binding site" evidence="1">
    <location>
        <position position="302"/>
    </location>
    <ligand>
        <name>GTP</name>
        <dbReference type="ChEBI" id="CHEBI:37565"/>
    </ligand>
</feature>
<feature type="binding site" evidence="1">
    <location>
        <begin position="328"/>
        <end position="330"/>
    </location>
    <ligand>
        <name>GTP</name>
        <dbReference type="ChEBI" id="CHEBI:37565"/>
    </ligand>
</feature>
<feature type="binding site" evidence="1">
    <location>
        <begin position="408"/>
        <end position="410"/>
    </location>
    <ligand>
        <name>GTP</name>
        <dbReference type="ChEBI" id="CHEBI:37565"/>
    </ligand>
</feature>
<proteinExistence type="inferred from homology"/>
<reference key="1">
    <citation type="journal article" date="2007" name="PLoS Biol.">
        <title>Evolution of symbiotic bacteria in the distal human intestine.</title>
        <authorList>
            <person name="Xu J."/>
            <person name="Mahowald M.A."/>
            <person name="Ley R.E."/>
            <person name="Lozupone C.A."/>
            <person name="Hamady M."/>
            <person name="Martens E.C."/>
            <person name="Henrissat B."/>
            <person name="Coutinho P.M."/>
            <person name="Minx P."/>
            <person name="Latreille P."/>
            <person name="Cordum H."/>
            <person name="Van Brunt A."/>
            <person name="Kim K."/>
            <person name="Fulton R.S."/>
            <person name="Fulton L.A."/>
            <person name="Clifton S.W."/>
            <person name="Wilson R.K."/>
            <person name="Knight R.D."/>
            <person name="Gordon J.I."/>
        </authorList>
    </citation>
    <scope>NUCLEOTIDE SEQUENCE [LARGE SCALE GENOMIC DNA]</scope>
    <source>
        <strain>ATCC 8482 / DSM 1447 / JCM 5826 / CCUG 4940 / NBRC 14291 / NCTC 11154</strain>
    </source>
</reference>